<reference key="1">
    <citation type="submission" date="2009-06" db="EMBL/GenBank/DDBJ databases">
        <title>Complete sequence of Desulfovibrio salexigens DSM 2638.</title>
        <authorList>
            <consortium name="US DOE Joint Genome Institute"/>
            <person name="Lucas S."/>
            <person name="Copeland A."/>
            <person name="Lapidus A."/>
            <person name="Glavina del Rio T."/>
            <person name="Tice H."/>
            <person name="Bruce D."/>
            <person name="Goodwin L."/>
            <person name="Pitluck S."/>
            <person name="Munk A.C."/>
            <person name="Brettin T."/>
            <person name="Detter J.C."/>
            <person name="Han C."/>
            <person name="Tapia R."/>
            <person name="Larimer F."/>
            <person name="Land M."/>
            <person name="Hauser L."/>
            <person name="Kyrpides N."/>
            <person name="Anderson I."/>
            <person name="Wall J.D."/>
            <person name="Arkin A.P."/>
            <person name="Dehal P."/>
            <person name="Chivian D."/>
            <person name="Giles B."/>
            <person name="Hazen T.C."/>
        </authorList>
    </citation>
    <scope>NUCLEOTIDE SEQUENCE [LARGE SCALE GENOMIC DNA]</scope>
    <source>
        <strain>ATCC 14822 / DSM 2638 / NCIMB 8403 / VKM B-1763</strain>
    </source>
</reference>
<comment type="function">
    <text evidence="1">Binds to 23S rRNA. Forms part of two intersubunit bridges in the 70S ribosome.</text>
</comment>
<comment type="subunit">
    <text evidence="1">Part of the 50S ribosomal subunit. Forms a cluster with proteins L3 and L19. In the 70S ribosome, L14 and L19 interact and together make contacts with the 16S rRNA in bridges B5 and B8.</text>
</comment>
<comment type="similarity">
    <text evidence="1">Belongs to the universal ribosomal protein uL14 family.</text>
</comment>
<protein>
    <recommendedName>
        <fullName evidence="1">Large ribosomal subunit protein uL14</fullName>
    </recommendedName>
    <alternativeName>
        <fullName evidence="2">50S ribosomal protein L14</fullName>
    </alternativeName>
</protein>
<evidence type="ECO:0000255" key="1">
    <source>
        <dbReference type="HAMAP-Rule" id="MF_01367"/>
    </source>
</evidence>
<evidence type="ECO:0000305" key="2"/>
<sequence length="122" mass="13070">MIQVESKLDVADNSGAKKVSCIKVLGGSKRRYASVGDIIVVSVKEAMPHSKVKKGAVMKAVVVRTKKEIGRPDGSYIKFDNNSAVLLNNSMDPVGTRIFGPVARELRGAGFMKIVSLAPEVL</sequence>
<organism>
    <name type="scientific">Maridesulfovibrio salexigens (strain ATCC 14822 / DSM 2638 / NCIMB 8403 / VKM B-1763)</name>
    <name type="common">Desulfovibrio salexigens</name>
    <dbReference type="NCBI Taxonomy" id="526222"/>
    <lineage>
        <taxon>Bacteria</taxon>
        <taxon>Pseudomonadati</taxon>
        <taxon>Thermodesulfobacteriota</taxon>
        <taxon>Desulfovibrionia</taxon>
        <taxon>Desulfovibrionales</taxon>
        <taxon>Desulfovibrionaceae</taxon>
        <taxon>Maridesulfovibrio</taxon>
    </lineage>
</organism>
<accession>C6C195</accession>
<feature type="chain" id="PRO_1000214972" description="Large ribosomal subunit protein uL14">
    <location>
        <begin position="1"/>
        <end position="122"/>
    </location>
</feature>
<keyword id="KW-1185">Reference proteome</keyword>
<keyword id="KW-0687">Ribonucleoprotein</keyword>
<keyword id="KW-0689">Ribosomal protein</keyword>
<keyword id="KW-0694">RNA-binding</keyword>
<keyword id="KW-0699">rRNA-binding</keyword>
<dbReference type="EMBL" id="CP001649">
    <property type="protein sequence ID" value="ACS79258.1"/>
    <property type="molecule type" value="Genomic_DNA"/>
</dbReference>
<dbReference type="RefSeq" id="WP_015851077.1">
    <property type="nucleotide sequence ID" value="NC_012881.1"/>
</dbReference>
<dbReference type="SMR" id="C6C195"/>
<dbReference type="STRING" id="526222.Desal_1195"/>
<dbReference type="KEGG" id="dsa:Desal_1195"/>
<dbReference type="eggNOG" id="COG0093">
    <property type="taxonomic scope" value="Bacteria"/>
</dbReference>
<dbReference type="HOGENOM" id="CLU_095071_2_1_7"/>
<dbReference type="OrthoDB" id="9806379at2"/>
<dbReference type="Proteomes" id="UP000002601">
    <property type="component" value="Chromosome"/>
</dbReference>
<dbReference type="GO" id="GO:0022625">
    <property type="term" value="C:cytosolic large ribosomal subunit"/>
    <property type="evidence" value="ECO:0007669"/>
    <property type="project" value="TreeGrafter"/>
</dbReference>
<dbReference type="GO" id="GO:0070180">
    <property type="term" value="F:large ribosomal subunit rRNA binding"/>
    <property type="evidence" value="ECO:0007669"/>
    <property type="project" value="TreeGrafter"/>
</dbReference>
<dbReference type="GO" id="GO:0003735">
    <property type="term" value="F:structural constituent of ribosome"/>
    <property type="evidence" value="ECO:0007669"/>
    <property type="project" value="InterPro"/>
</dbReference>
<dbReference type="GO" id="GO:0006412">
    <property type="term" value="P:translation"/>
    <property type="evidence" value="ECO:0007669"/>
    <property type="project" value="UniProtKB-UniRule"/>
</dbReference>
<dbReference type="CDD" id="cd00337">
    <property type="entry name" value="Ribosomal_uL14"/>
    <property type="match status" value="1"/>
</dbReference>
<dbReference type="FunFam" id="2.40.150.20:FF:000001">
    <property type="entry name" value="50S ribosomal protein L14"/>
    <property type="match status" value="1"/>
</dbReference>
<dbReference type="Gene3D" id="2.40.150.20">
    <property type="entry name" value="Ribosomal protein L14"/>
    <property type="match status" value="1"/>
</dbReference>
<dbReference type="HAMAP" id="MF_01367">
    <property type="entry name" value="Ribosomal_uL14"/>
    <property type="match status" value="1"/>
</dbReference>
<dbReference type="InterPro" id="IPR000218">
    <property type="entry name" value="Ribosomal_uL14"/>
</dbReference>
<dbReference type="InterPro" id="IPR005745">
    <property type="entry name" value="Ribosomal_uL14_bac-type"/>
</dbReference>
<dbReference type="InterPro" id="IPR019972">
    <property type="entry name" value="Ribosomal_uL14_CS"/>
</dbReference>
<dbReference type="InterPro" id="IPR036853">
    <property type="entry name" value="Ribosomal_uL14_sf"/>
</dbReference>
<dbReference type="NCBIfam" id="TIGR01067">
    <property type="entry name" value="rplN_bact"/>
    <property type="match status" value="1"/>
</dbReference>
<dbReference type="PANTHER" id="PTHR11761">
    <property type="entry name" value="50S/60S RIBOSOMAL PROTEIN L14/L23"/>
    <property type="match status" value="1"/>
</dbReference>
<dbReference type="PANTHER" id="PTHR11761:SF3">
    <property type="entry name" value="LARGE RIBOSOMAL SUBUNIT PROTEIN UL14M"/>
    <property type="match status" value="1"/>
</dbReference>
<dbReference type="Pfam" id="PF00238">
    <property type="entry name" value="Ribosomal_L14"/>
    <property type="match status" value="1"/>
</dbReference>
<dbReference type="SMART" id="SM01374">
    <property type="entry name" value="Ribosomal_L14"/>
    <property type="match status" value="1"/>
</dbReference>
<dbReference type="SUPFAM" id="SSF50193">
    <property type="entry name" value="Ribosomal protein L14"/>
    <property type="match status" value="1"/>
</dbReference>
<dbReference type="PROSITE" id="PS00049">
    <property type="entry name" value="RIBOSOMAL_L14"/>
    <property type="match status" value="1"/>
</dbReference>
<proteinExistence type="inferred from homology"/>
<name>RL14_MARSD</name>
<gene>
    <name evidence="1" type="primary">rplN</name>
    <name type="ordered locus">Desal_1195</name>
</gene>